<name>C7104_ARATH</name>
<feature type="chain" id="PRO_0000411207" description="Cytochrome P450 710A4">
    <location>
        <begin position="1"/>
        <end position="493"/>
    </location>
</feature>
<feature type="transmembrane region" description="Helical" evidence="3">
    <location>
        <begin position="5"/>
        <end position="25"/>
    </location>
</feature>
<feature type="binding site" description="axial binding residue" evidence="2">
    <location>
        <position position="435"/>
    </location>
    <ligand>
        <name>heme</name>
        <dbReference type="ChEBI" id="CHEBI:30413"/>
    </ligand>
    <ligandPart>
        <name>Fe</name>
        <dbReference type="ChEBI" id="CHEBI:18248"/>
    </ligandPart>
</feature>
<reference key="1">
    <citation type="journal article" date="1999" name="Nature">
        <title>Sequence and analysis of chromosome 2 of the plant Arabidopsis thaliana.</title>
        <authorList>
            <person name="Lin X."/>
            <person name="Kaul S."/>
            <person name="Rounsley S.D."/>
            <person name="Shea T.P."/>
            <person name="Benito M.-I."/>
            <person name="Town C.D."/>
            <person name="Fujii C.Y."/>
            <person name="Mason T.M."/>
            <person name="Bowman C.L."/>
            <person name="Barnstead M.E."/>
            <person name="Feldblyum T.V."/>
            <person name="Buell C.R."/>
            <person name="Ketchum K.A."/>
            <person name="Lee J.J."/>
            <person name="Ronning C.M."/>
            <person name="Koo H.L."/>
            <person name="Moffat K.S."/>
            <person name="Cronin L.A."/>
            <person name="Shen M."/>
            <person name="Pai G."/>
            <person name="Van Aken S."/>
            <person name="Umayam L."/>
            <person name="Tallon L.J."/>
            <person name="Gill J.E."/>
            <person name="Adams M.D."/>
            <person name="Carrera A.J."/>
            <person name="Creasy T.H."/>
            <person name="Goodman H.M."/>
            <person name="Somerville C.R."/>
            <person name="Copenhaver G.P."/>
            <person name="Preuss D."/>
            <person name="Nierman W.C."/>
            <person name="White O."/>
            <person name="Eisen J.A."/>
            <person name="Salzberg S.L."/>
            <person name="Fraser C.M."/>
            <person name="Venter J.C."/>
        </authorList>
    </citation>
    <scope>NUCLEOTIDE SEQUENCE [LARGE SCALE GENOMIC DNA]</scope>
    <source>
        <strain>cv. Columbia</strain>
    </source>
</reference>
<reference key="2">
    <citation type="journal article" date="2017" name="Plant J.">
        <title>Araport11: a complete reannotation of the Arabidopsis thaliana reference genome.</title>
        <authorList>
            <person name="Cheng C.Y."/>
            <person name="Krishnakumar V."/>
            <person name="Chan A.P."/>
            <person name="Thibaud-Nissen F."/>
            <person name="Schobel S."/>
            <person name="Town C.D."/>
        </authorList>
    </citation>
    <scope>GENOME REANNOTATION</scope>
    <source>
        <strain>cv. Columbia</strain>
    </source>
</reference>
<reference key="3">
    <citation type="journal article" date="2004" name="Genome Res.">
        <title>Whole genome sequence comparisons and 'full-length' cDNA sequences: a combined approach to evaluate and improve Arabidopsis genome annotation.</title>
        <authorList>
            <person name="Castelli V."/>
            <person name="Aury J.-M."/>
            <person name="Jaillon O."/>
            <person name="Wincker P."/>
            <person name="Clepet C."/>
            <person name="Menard M."/>
            <person name="Cruaud C."/>
            <person name="Quetier F."/>
            <person name="Scarpelli C."/>
            <person name="Schaechter V."/>
            <person name="Temple G."/>
            <person name="Caboche M."/>
            <person name="Weissenbach J."/>
            <person name="Salanoubat M."/>
        </authorList>
    </citation>
    <scope>NUCLEOTIDE SEQUENCE [LARGE SCALE MRNA]</scope>
    <source>
        <strain>cv. Columbia</strain>
    </source>
</reference>
<reference key="4">
    <citation type="journal article" date="2006" name="Plant Cell">
        <title>Cytochrome P450 CYP710A encodes the sterol C-22 desaturase in Arabidopsis and tomato.</title>
        <authorList>
            <person name="Morikawa T."/>
            <person name="Mizutani M."/>
            <person name="Aoki N."/>
            <person name="Watanabe B."/>
            <person name="Saga H."/>
            <person name="Saito S."/>
            <person name="Oikawa A."/>
            <person name="Suzuki H."/>
            <person name="Sakurai N."/>
            <person name="Shibata D."/>
            <person name="Wadano A."/>
            <person name="Sakata K."/>
            <person name="Ohta D."/>
        </authorList>
    </citation>
    <scope>GENE FAMILY</scope>
    <scope>NOMENCLATURE</scope>
    <scope>TISSUE SPECIFICITY</scope>
</reference>
<reference key="5">
    <citation type="journal article" date="2008" name="Planta">
        <title>Overexpression of CYP710A1 and CYP710A4 in transgenic Arabidopsis plants increases the level of stigmasterol at the expense of sitosterol.</title>
        <authorList>
            <person name="Arnqvist L."/>
            <person name="Persson M."/>
            <person name="Jonsson L."/>
            <person name="Dutta P.C."/>
            <person name="Sitbon F."/>
        </authorList>
    </citation>
    <scope>FUNCTION</scope>
</reference>
<reference key="6">
    <citation type="journal article" date="2010" name="Plant J.">
        <title>A role for beta-sitosterol to stigmasterol conversion in plant-pathogen interactions.</title>
        <authorList>
            <person name="Griebel T."/>
            <person name="Zeier J."/>
        </authorList>
    </citation>
    <scope>INDUCTION</scope>
</reference>
<accession>Q9ZV28</accession>
<gene>
    <name evidence="7" type="primary">CYP710A4</name>
    <name evidence="9" type="ordered locus">At2g28860</name>
    <name evidence="10" type="ORF">F8N16.15</name>
</gene>
<comment type="function">
    <text evidence="5">Required to form the C-22 double bond in the sterol side chain. Possesses C-22 desaturase activity toward beta-sitosterol and produces stigmasterol.</text>
</comment>
<comment type="catalytic activity">
    <reaction evidence="1">
        <text>5-dehydroepisterol + NADPH + O2 + H(+) = ergosta-5,7,22,24(28)-tetraen-3beta-ol + NADP(+) + 2 H2O</text>
        <dbReference type="Rhea" id="RHEA:33467"/>
        <dbReference type="ChEBI" id="CHEBI:15377"/>
        <dbReference type="ChEBI" id="CHEBI:15378"/>
        <dbReference type="ChEBI" id="CHEBI:15379"/>
        <dbReference type="ChEBI" id="CHEBI:18249"/>
        <dbReference type="ChEBI" id="CHEBI:52972"/>
        <dbReference type="ChEBI" id="CHEBI:57783"/>
        <dbReference type="ChEBI" id="CHEBI:58349"/>
        <dbReference type="EC" id="1.14.19.41"/>
    </reaction>
</comment>
<comment type="cofactor">
    <cofactor evidence="2">
        <name>heme</name>
        <dbReference type="ChEBI" id="CHEBI:30413"/>
    </cofactor>
</comment>
<comment type="pathway">
    <text evidence="4">Steroid biosynthesis; sterol biosynthesis.</text>
</comment>
<comment type="subcellular location">
    <subcellularLocation>
        <location evidence="8">Membrane</location>
        <topology evidence="3">Single-pass membrane protein</topology>
    </subcellularLocation>
</comment>
<comment type="tissue specificity">
    <text evidence="4">Very weak expression in roots and root hairs. Not detected in the root tips.</text>
</comment>
<comment type="induction">
    <text evidence="6">Not induced by pathogen infection.</text>
</comment>
<comment type="miscellaneous">
    <text evidence="4">Plants overexpressing CYP710A4 show higher levels of stigmasterol and lower levels of beta-sitosterol than the wild-type.</text>
</comment>
<comment type="similarity">
    <text evidence="8">Belongs to the cytochrome P450 family.</text>
</comment>
<comment type="sequence caution" evidence="8">
    <conflict type="miscellaneous discrepancy">
        <sequence resource="EMBL" id="BX820851"/>
    </conflict>
    <text>Sequencing errors.</text>
</comment>
<keyword id="KW-0349">Heme</keyword>
<keyword id="KW-0408">Iron</keyword>
<keyword id="KW-0444">Lipid biosynthesis</keyword>
<keyword id="KW-0443">Lipid metabolism</keyword>
<keyword id="KW-0472">Membrane</keyword>
<keyword id="KW-0479">Metal-binding</keyword>
<keyword id="KW-0503">Monooxygenase</keyword>
<keyword id="KW-0521">NADP</keyword>
<keyword id="KW-0560">Oxidoreductase</keyword>
<keyword id="KW-1185">Reference proteome</keyword>
<keyword id="KW-0752">Steroid biosynthesis</keyword>
<keyword id="KW-0753">Steroid metabolism</keyword>
<keyword id="KW-0756">Sterol biosynthesis</keyword>
<keyword id="KW-1207">Sterol metabolism</keyword>
<keyword id="KW-0812">Transmembrane</keyword>
<keyword id="KW-1133">Transmembrane helix</keyword>
<protein>
    <recommendedName>
        <fullName evidence="7">Cytochrome P450 710A4</fullName>
        <ecNumber evidence="1">1.14.19.41</ecNumber>
    </recommendedName>
    <alternativeName>
        <fullName evidence="7">C-22 sterol desaturase</fullName>
    </alternativeName>
</protein>
<proteinExistence type="evidence at transcript level"/>
<evidence type="ECO:0000250" key="1">
    <source>
        <dbReference type="UniProtKB" id="O64697"/>
    </source>
</evidence>
<evidence type="ECO:0000250" key="2">
    <source>
        <dbReference type="UniProtKB" id="P04798"/>
    </source>
</evidence>
<evidence type="ECO:0000255" key="3"/>
<evidence type="ECO:0000269" key="4">
    <source>
    </source>
</evidence>
<evidence type="ECO:0000269" key="5">
    <source>
    </source>
</evidence>
<evidence type="ECO:0000269" key="6">
    <source>
    </source>
</evidence>
<evidence type="ECO:0000303" key="7">
    <source>
    </source>
</evidence>
<evidence type="ECO:0000305" key="8"/>
<evidence type="ECO:0000312" key="9">
    <source>
        <dbReference type="Araport" id="AT2G28860"/>
    </source>
</evidence>
<evidence type="ECO:0000312" key="10">
    <source>
        <dbReference type="EMBL" id="AAC79590.1"/>
    </source>
</evidence>
<organism>
    <name type="scientific">Arabidopsis thaliana</name>
    <name type="common">Mouse-ear cress</name>
    <dbReference type="NCBI Taxonomy" id="3702"/>
    <lineage>
        <taxon>Eukaryota</taxon>
        <taxon>Viridiplantae</taxon>
        <taxon>Streptophyta</taxon>
        <taxon>Embryophyta</taxon>
        <taxon>Tracheophyta</taxon>
        <taxon>Spermatophyta</taxon>
        <taxon>Magnoliopsida</taxon>
        <taxon>eudicotyledons</taxon>
        <taxon>Gunneridae</taxon>
        <taxon>Pentapetalae</taxon>
        <taxon>rosids</taxon>
        <taxon>malvids</taxon>
        <taxon>Brassicales</taxon>
        <taxon>Brassicaceae</taxon>
        <taxon>Camelineae</taxon>
        <taxon>Arabidopsis</taxon>
    </lineage>
</organism>
<dbReference type="EC" id="1.14.19.41" evidence="1"/>
<dbReference type="EMBL" id="AC005727">
    <property type="protein sequence ID" value="AAC79590.1"/>
    <property type="molecule type" value="Genomic_DNA"/>
</dbReference>
<dbReference type="EMBL" id="CP002685">
    <property type="protein sequence ID" value="AEC08182.1"/>
    <property type="molecule type" value="Genomic_DNA"/>
</dbReference>
<dbReference type="EMBL" id="BX820851">
    <property type="status" value="NOT_ANNOTATED_CDS"/>
    <property type="molecule type" value="mRNA"/>
</dbReference>
<dbReference type="PIR" id="G84689">
    <property type="entry name" value="G84689"/>
</dbReference>
<dbReference type="RefSeq" id="NP_180452.1">
    <property type="nucleotide sequence ID" value="NM_128445.3"/>
</dbReference>
<dbReference type="SMR" id="Q9ZV28"/>
<dbReference type="FunCoup" id="Q9ZV28">
    <property type="interactions" value="910"/>
</dbReference>
<dbReference type="STRING" id="3702.Q9ZV28"/>
<dbReference type="PaxDb" id="3702-AT2G28860.1"/>
<dbReference type="EnsemblPlants" id="AT2G28860.1">
    <property type="protein sequence ID" value="AT2G28860.1"/>
    <property type="gene ID" value="AT2G28860"/>
</dbReference>
<dbReference type="GeneID" id="817435"/>
<dbReference type="Gramene" id="AT2G28860.1">
    <property type="protein sequence ID" value="AT2G28860.1"/>
    <property type="gene ID" value="AT2G28860"/>
</dbReference>
<dbReference type="KEGG" id="ath:AT2G28860"/>
<dbReference type="Araport" id="AT2G28860"/>
<dbReference type="TAIR" id="AT2G28860">
    <property type="gene designation" value="CYP710A4"/>
</dbReference>
<dbReference type="eggNOG" id="KOG0157">
    <property type="taxonomic scope" value="Eukaryota"/>
</dbReference>
<dbReference type="HOGENOM" id="CLU_023517_1_0_1"/>
<dbReference type="InParanoid" id="Q9ZV28"/>
<dbReference type="OMA" id="KPRCARF"/>
<dbReference type="PhylomeDB" id="Q9ZV28"/>
<dbReference type="BRENDA" id="1.14.19.41">
    <property type="organism ID" value="399"/>
</dbReference>
<dbReference type="UniPathway" id="UPA00766"/>
<dbReference type="PRO" id="PR:Q9ZV28"/>
<dbReference type="Proteomes" id="UP000006548">
    <property type="component" value="Chromosome 2"/>
</dbReference>
<dbReference type="ExpressionAtlas" id="Q9ZV28">
    <property type="expression patterns" value="baseline and differential"/>
</dbReference>
<dbReference type="GO" id="GO:0016020">
    <property type="term" value="C:membrane"/>
    <property type="evidence" value="ECO:0007669"/>
    <property type="project" value="UniProtKB-SubCell"/>
</dbReference>
<dbReference type="GO" id="GO:0000249">
    <property type="term" value="F:C-22 sterol desaturase (NADPH) activity"/>
    <property type="evidence" value="ECO:0000314"/>
    <property type="project" value="UniProtKB"/>
</dbReference>
<dbReference type="GO" id="GO:0020037">
    <property type="term" value="F:heme binding"/>
    <property type="evidence" value="ECO:0007669"/>
    <property type="project" value="InterPro"/>
</dbReference>
<dbReference type="GO" id="GO:0005506">
    <property type="term" value="F:iron ion binding"/>
    <property type="evidence" value="ECO:0007669"/>
    <property type="project" value="InterPro"/>
</dbReference>
<dbReference type="GO" id="GO:0004497">
    <property type="term" value="F:monooxygenase activity"/>
    <property type="evidence" value="ECO:0007669"/>
    <property type="project" value="UniProtKB-KW"/>
</dbReference>
<dbReference type="GO" id="GO:0016126">
    <property type="term" value="P:sterol biosynthetic process"/>
    <property type="evidence" value="ECO:0007669"/>
    <property type="project" value="UniProtKB-UniPathway"/>
</dbReference>
<dbReference type="CDD" id="cd11082">
    <property type="entry name" value="CYP61_CYP710"/>
    <property type="match status" value="1"/>
</dbReference>
<dbReference type="FunFam" id="1.10.630.10:FF:000021">
    <property type="entry name" value="Cytochrome P450 61"/>
    <property type="match status" value="1"/>
</dbReference>
<dbReference type="Gene3D" id="1.10.630.10">
    <property type="entry name" value="Cytochrome P450"/>
    <property type="match status" value="1"/>
</dbReference>
<dbReference type="InterPro" id="IPR001128">
    <property type="entry name" value="Cyt_P450"/>
</dbReference>
<dbReference type="InterPro" id="IPR017972">
    <property type="entry name" value="Cyt_P450_CS"/>
</dbReference>
<dbReference type="InterPro" id="IPR002401">
    <property type="entry name" value="Cyt_P450_E_grp-I"/>
</dbReference>
<dbReference type="InterPro" id="IPR036396">
    <property type="entry name" value="Cyt_P450_sf"/>
</dbReference>
<dbReference type="PANTHER" id="PTHR24286:SF228">
    <property type="entry name" value="C-22 STEROL DESATURASE ERG5"/>
    <property type="match status" value="1"/>
</dbReference>
<dbReference type="PANTHER" id="PTHR24286">
    <property type="entry name" value="CYTOCHROME P450 26"/>
    <property type="match status" value="1"/>
</dbReference>
<dbReference type="Pfam" id="PF00067">
    <property type="entry name" value="p450"/>
    <property type="match status" value="1"/>
</dbReference>
<dbReference type="PRINTS" id="PR00463">
    <property type="entry name" value="EP450I"/>
</dbReference>
<dbReference type="PRINTS" id="PR00385">
    <property type="entry name" value="P450"/>
</dbReference>
<dbReference type="SUPFAM" id="SSF48264">
    <property type="entry name" value="Cytochrome P450"/>
    <property type="match status" value="1"/>
</dbReference>
<dbReference type="PROSITE" id="PS00086">
    <property type="entry name" value="CYTOCHROME_P450"/>
    <property type="match status" value="1"/>
</dbReference>
<sequence>MVSSVSLFASLTPYLVSALLLFLLLEQLFYRVKKRNLPGPLFVFPIIGNVVALIRDPTSFWDKQSAMADTSVGLSVNYLIGKFIIYIKDAELSNKVLSNIRPDAFQLTGHPFGKKLFGDHSLIFMFGEDHKSVRRQVAPNFTRKPLSAYSSLQQIVILRHLRQWEESFSSGSRPVSMRQLIRELNLETSQTVFVGPYLDKEVKKTICDDYSLLTLGTMAIPIDLPGFTFGEARQAVSRLVNTMSVCVGKSKAKMAAGENPTCLVDFWTHSIIEENPPPPHSKDKEISCVLVDFMFASQDASTSSLLWAVVMLESEPEVLRRVREDVARFWSSESNELITADQLAEMKYTRAVAREVLRYRPPASMIPHVAVSDFRLTESYTIPKGTIVFPSLFDASFQGFTEPDRFDPDRFSETRQEDEVFKRNFLTFGNGSHQCVGQRYAMNHLVLFIAMFSSMFDFKRVRSDGCDDIVHIPTMSPKDGCTVFLSSRLVTSP</sequence>